<feature type="chain" id="PRO_0000114940" description="Regulatory protein CAT8">
    <location>
        <begin position="1"/>
        <end position="1433"/>
    </location>
</feature>
<feature type="DNA-binding region" description="Zn(2)-C6 fungal-type" evidence="1">
    <location>
        <begin position="70"/>
        <end position="97"/>
    </location>
</feature>
<feature type="region of interest" description="Disordered" evidence="2">
    <location>
        <begin position="20"/>
        <end position="40"/>
    </location>
</feature>
<feature type="region of interest" description="Disordered" evidence="2">
    <location>
        <begin position="936"/>
        <end position="1024"/>
    </location>
</feature>
<feature type="region of interest" description="Disordered" evidence="2">
    <location>
        <begin position="1137"/>
        <end position="1162"/>
    </location>
</feature>
<feature type="region of interest" description="Disordered" evidence="2">
    <location>
        <begin position="1200"/>
        <end position="1236"/>
    </location>
</feature>
<feature type="region of interest" description="Disordered" evidence="2">
    <location>
        <begin position="1324"/>
        <end position="1433"/>
    </location>
</feature>
<feature type="compositionally biased region" description="Polar residues" evidence="2">
    <location>
        <begin position="20"/>
        <end position="38"/>
    </location>
</feature>
<feature type="compositionally biased region" description="Polar residues" evidence="2">
    <location>
        <begin position="936"/>
        <end position="946"/>
    </location>
</feature>
<feature type="compositionally biased region" description="Basic and acidic residues" evidence="2">
    <location>
        <begin position="947"/>
        <end position="965"/>
    </location>
</feature>
<feature type="compositionally biased region" description="Basic and acidic residues" evidence="2">
    <location>
        <begin position="994"/>
        <end position="1005"/>
    </location>
</feature>
<feature type="compositionally biased region" description="Polar residues" evidence="2">
    <location>
        <begin position="1138"/>
        <end position="1162"/>
    </location>
</feature>
<feature type="compositionally biased region" description="Polar residues" evidence="2">
    <location>
        <begin position="1221"/>
        <end position="1235"/>
    </location>
</feature>
<feature type="compositionally biased region" description="Polar residues" evidence="2">
    <location>
        <begin position="1326"/>
        <end position="1348"/>
    </location>
</feature>
<feature type="compositionally biased region" description="Low complexity" evidence="2">
    <location>
        <begin position="1349"/>
        <end position="1362"/>
    </location>
</feature>
<feature type="compositionally biased region" description="Polar residues" evidence="2">
    <location>
        <begin position="1363"/>
        <end position="1391"/>
    </location>
</feature>
<feature type="compositionally biased region" description="Polar residues" evidence="2">
    <location>
        <begin position="1418"/>
        <end position="1433"/>
    </location>
</feature>
<feature type="sequence conflict" description="In Ref. 4; CAA63906." evidence="3" ref="4">
    <original>S</original>
    <variation>A</variation>
    <location>
        <position position="303"/>
    </location>
</feature>
<feature type="sequence conflict" description="In Ref. 1; CAA55139." evidence="3" ref="1">
    <original>K</original>
    <variation>L</variation>
    <location>
        <position position="747"/>
    </location>
</feature>
<feature type="sequence conflict" description="In Ref. 4; CAA63906." evidence="3" ref="4">
    <original>T</original>
    <variation>A</variation>
    <location>
        <position position="768"/>
    </location>
</feature>
<feature type="sequence conflict" description="In Ref. 4; CAA63906." evidence="3" ref="4">
    <location>
        <begin position="999"/>
        <end position="1002"/>
    </location>
</feature>
<feature type="sequence conflict" description="In Ref. 4; CAA63906." evidence="3" ref="4">
    <original>G</original>
    <variation>S</variation>
    <location>
        <position position="1008"/>
    </location>
</feature>
<feature type="sequence conflict" description="In Ref. 4; CAA63906." evidence="3" ref="4">
    <original>H</original>
    <variation>Q</variation>
    <location>
        <position position="1016"/>
    </location>
</feature>
<feature type="sequence conflict" description="In Ref. 4; CAA63906." evidence="3" ref="4">
    <original>Q</original>
    <variation>P</variation>
    <location>
        <position position="1019"/>
    </location>
</feature>
<feature type="sequence conflict" description="In Ref. 4; CAA63906." evidence="3" ref="4">
    <original>V</original>
    <variation>M</variation>
    <location>
        <position position="1061"/>
    </location>
</feature>
<feature type="sequence conflict" description="In Ref. 4; CAA63906." evidence="3" ref="4">
    <original>TDA</original>
    <variation>ADS</variation>
    <location>
        <begin position="1072"/>
        <end position="1074"/>
    </location>
</feature>
<feature type="sequence conflict" description="In Ref. 4; CAA63906." evidence="3" ref="4">
    <original>N</original>
    <variation>S</variation>
    <location>
        <position position="1092"/>
    </location>
</feature>
<feature type="sequence conflict" description="In Ref. 4; CAA63906." evidence="3" ref="4">
    <original>I</original>
    <variation>V</variation>
    <location>
        <position position="1100"/>
    </location>
</feature>
<feature type="sequence conflict" description="In Ref. 4; CAA63906." evidence="3" ref="4">
    <original>M</original>
    <variation>L</variation>
    <location>
        <position position="1120"/>
    </location>
</feature>
<feature type="sequence conflict" description="In Ref. 4; CAA63906." evidence="3" ref="4">
    <original>S</original>
    <variation>A</variation>
    <location>
        <position position="1162"/>
    </location>
</feature>
<dbReference type="EMBL" id="X78344">
    <property type="protein sequence ID" value="CAA55139.1"/>
    <property type="molecule type" value="Genomic_DNA"/>
</dbReference>
<dbReference type="EMBL" id="Z49704">
    <property type="protein sequence ID" value="CAA89778.1"/>
    <property type="molecule type" value="Genomic_DNA"/>
</dbReference>
<dbReference type="EMBL" id="X94215">
    <property type="protein sequence ID" value="CAA63906.1"/>
    <property type="molecule type" value="Genomic_DNA"/>
</dbReference>
<dbReference type="EMBL" id="BK006946">
    <property type="protein sequence ID" value="DAA10181.1"/>
    <property type="molecule type" value="Genomic_DNA"/>
</dbReference>
<dbReference type="PIR" id="S54587">
    <property type="entry name" value="S54587"/>
</dbReference>
<dbReference type="RefSeq" id="NP_014007.1">
    <property type="nucleotide sequence ID" value="NM_001182787.1"/>
</dbReference>
<dbReference type="SMR" id="P39113"/>
<dbReference type="BioGRID" id="35459">
    <property type="interactions" value="115"/>
</dbReference>
<dbReference type="DIP" id="DIP-4397N"/>
<dbReference type="FunCoup" id="P39113">
    <property type="interactions" value="375"/>
</dbReference>
<dbReference type="IntAct" id="P39113">
    <property type="interactions" value="1"/>
</dbReference>
<dbReference type="MINT" id="P39113"/>
<dbReference type="STRING" id="4932.YMR280C"/>
<dbReference type="GlyGen" id="P39113">
    <property type="glycosylation" value="1 site, 1 O-linked glycan (1 site)"/>
</dbReference>
<dbReference type="iPTMnet" id="P39113"/>
<dbReference type="PaxDb" id="4932-YMR280C"/>
<dbReference type="PeptideAtlas" id="P39113"/>
<dbReference type="EnsemblFungi" id="YMR280C_mRNA">
    <property type="protein sequence ID" value="YMR280C"/>
    <property type="gene ID" value="YMR280C"/>
</dbReference>
<dbReference type="GeneID" id="855323"/>
<dbReference type="KEGG" id="sce:YMR280C"/>
<dbReference type="AGR" id="SGD:S000004893"/>
<dbReference type="SGD" id="S000004893">
    <property type="gene designation" value="CAT8"/>
</dbReference>
<dbReference type="VEuPathDB" id="FungiDB:YMR280C"/>
<dbReference type="eggNOG" id="ENOG502QTKQ">
    <property type="taxonomic scope" value="Eukaryota"/>
</dbReference>
<dbReference type="HOGENOM" id="CLU_004300_1_0_1"/>
<dbReference type="InParanoid" id="P39113"/>
<dbReference type="OMA" id="FLAKCMI"/>
<dbReference type="OrthoDB" id="1924787at2759"/>
<dbReference type="BioCyc" id="YEAST:G3O-32951-MONOMER"/>
<dbReference type="BioGRID-ORCS" id="855323">
    <property type="hits" value="3 hits in 13 CRISPR screens"/>
</dbReference>
<dbReference type="PRO" id="PR:P39113"/>
<dbReference type="Proteomes" id="UP000002311">
    <property type="component" value="Chromosome XIII"/>
</dbReference>
<dbReference type="RNAct" id="P39113">
    <property type="molecule type" value="protein"/>
</dbReference>
<dbReference type="GO" id="GO:0005737">
    <property type="term" value="C:cytoplasm"/>
    <property type="evidence" value="ECO:0007005"/>
    <property type="project" value="SGD"/>
</dbReference>
<dbReference type="GO" id="GO:0005634">
    <property type="term" value="C:nucleus"/>
    <property type="evidence" value="ECO:0007005"/>
    <property type="project" value="SGD"/>
</dbReference>
<dbReference type="GO" id="GO:0001228">
    <property type="term" value="F:DNA-binding transcription activator activity, RNA polymerase II-specific"/>
    <property type="evidence" value="ECO:0000314"/>
    <property type="project" value="SGD"/>
</dbReference>
<dbReference type="GO" id="GO:0000981">
    <property type="term" value="F:DNA-binding transcription factor activity, RNA polymerase II-specific"/>
    <property type="evidence" value="ECO:0000318"/>
    <property type="project" value="GO_Central"/>
</dbReference>
<dbReference type="GO" id="GO:0000978">
    <property type="term" value="F:RNA polymerase II cis-regulatory region sequence-specific DNA binding"/>
    <property type="evidence" value="ECO:0000314"/>
    <property type="project" value="SGD"/>
</dbReference>
<dbReference type="GO" id="GO:0043565">
    <property type="term" value="F:sequence-specific DNA binding"/>
    <property type="evidence" value="ECO:0000318"/>
    <property type="project" value="GO_Central"/>
</dbReference>
<dbReference type="GO" id="GO:0008270">
    <property type="term" value="F:zinc ion binding"/>
    <property type="evidence" value="ECO:0007669"/>
    <property type="project" value="InterPro"/>
</dbReference>
<dbReference type="GO" id="GO:0006351">
    <property type="term" value="P:DNA-templated transcription"/>
    <property type="evidence" value="ECO:0007669"/>
    <property type="project" value="InterPro"/>
</dbReference>
<dbReference type="GO" id="GO:0045722">
    <property type="term" value="P:positive regulation of gluconeogenesis"/>
    <property type="evidence" value="ECO:0000315"/>
    <property type="project" value="SGD"/>
</dbReference>
<dbReference type="GO" id="GO:2000876">
    <property type="term" value="P:positive regulation of glyoxylate cycle"/>
    <property type="evidence" value="ECO:0000315"/>
    <property type="project" value="SGD"/>
</dbReference>
<dbReference type="GO" id="GO:0045944">
    <property type="term" value="P:positive regulation of transcription by RNA polymerase II"/>
    <property type="evidence" value="ECO:0000315"/>
    <property type="project" value="SGD"/>
</dbReference>
<dbReference type="CDD" id="cd12148">
    <property type="entry name" value="fungal_TF_MHR"/>
    <property type="match status" value="1"/>
</dbReference>
<dbReference type="CDD" id="cd00067">
    <property type="entry name" value="GAL4"/>
    <property type="match status" value="1"/>
</dbReference>
<dbReference type="CDD" id="cd15485">
    <property type="entry name" value="ZIP_Cat8"/>
    <property type="match status" value="1"/>
</dbReference>
<dbReference type="Gene3D" id="4.10.240.10">
    <property type="entry name" value="Zn(2)-C6 fungal-type DNA-binding domain"/>
    <property type="match status" value="1"/>
</dbReference>
<dbReference type="InterPro" id="IPR050987">
    <property type="entry name" value="AtrR-like"/>
</dbReference>
<dbReference type="InterPro" id="IPR007219">
    <property type="entry name" value="Transcription_factor_dom_fun"/>
</dbReference>
<dbReference type="InterPro" id="IPR036864">
    <property type="entry name" value="Zn2-C6_fun-type_DNA-bd_sf"/>
</dbReference>
<dbReference type="InterPro" id="IPR001138">
    <property type="entry name" value="Zn2Cys6_DnaBD"/>
</dbReference>
<dbReference type="PANTHER" id="PTHR46910:SF12">
    <property type="entry name" value="REGULATORY PROTEIN CAT8"/>
    <property type="match status" value="1"/>
</dbReference>
<dbReference type="PANTHER" id="PTHR46910">
    <property type="entry name" value="TRANSCRIPTION FACTOR PDR1"/>
    <property type="match status" value="1"/>
</dbReference>
<dbReference type="Pfam" id="PF04082">
    <property type="entry name" value="Fungal_trans"/>
    <property type="match status" value="1"/>
</dbReference>
<dbReference type="Pfam" id="PF00172">
    <property type="entry name" value="Zn_clus"/>
    <property type="match status" value="1"/>
</dbReference>
<dbReference type="SMART" id="SM00906">
    <property type="entry name" value="Fungal_trans"/>
    <property type="match status" value="1"/>
</dbReference>
<dbReference type="SMART" id="SM00066">
    <property type="entry name" value="GAL4"/>
    <property type="match status" value="1"/>
</dbReference>
<dbReference type="SUPFAM" id="SSF57701">
    <property type="entry name" value="Zn2/Cys6 DNA-binding domain"/>
    <property type="match status" value="1"/>
</dbReference>
<dbReference type="PROSITE" id="PS00463">
    <property type="entry name" value="ZN2_CY6_FUNGAL_1"/>
    <property type="match status" value="1"/>
</dbReference>
<dbReference type="PROSITE" id="PS50048">
    <property type="entry name" value="ZN2_CY6_FUNGAL_2"/>
    <property type="match status" value="1"/>
</dbReference>
<proteinExistence type="evidence at protein level"/>
<reference key="1">
    <citation type="journal article" date="1995" name="Mol. Cell. Biol.">
        <title>CAT8, a new zinc cluster-encoding gene necessary for derepression of gluconeogenic enzymes in the yeast Saccharomyces cerevisiae.</title>
        <authorList>
            <person name="Hedges D."/>
            <person name="Proft M."/>
            <person name="Entian K.-D."/>
        </authorList>
    </citation>
    <scope>NUCLEOTIDE SEQUENCE [GENOMIC DNA]</scope>
</reference>
<reference key="2">
    <citation type="journal article" date="1997" name="Nature">
        <title>The nucleotide sequence of Saccharomyces cerevisiae chromosome XIII.</title>
        <authorList>
            <person name="Bowman S."/>
            <person name="Churcher C.M."/>
            <person name="Badcock K."/>
            <person name="Brown D."/>
            <person name="Chillingworth T."/>
            <person name="Connor R."/>
            <person name="Dedman K."/>
            <person name="Devlin K."/>
            <person name="Gentles S."/>
            <person name="Hamlin N."/>
            <person name="Hunt S."/>
            <person name="Jagels K."/>
            <person name="Lye G."/>
            <person name="Moule S."/>
            <person name="Odell C."/>
            <person name="Pearson D."/>
            <person name="Rajandream M.A."/>
            <person name="Rice P."/>
            <person name="Skelton J."/>
            <person name="Walsh S.V."/>
            <person name="Whitehead S."/>
            <person name="Barrell B.G."/>
        </authorList>
    </citation>
    <scope>NUCLEOTIDE SEQUENCE [LARGE SCALE GENOMIC DNA]</scope>
    <source>
        <strain>ATCC 204508 / S288c</strain>
    </source>
</reference>
<reference key="3">
    <citation type="journal article" date="2014" name="G3 (Bethesda)">
        <title>The reference genome sequence of Saccharomyces cerevisiae: Then and now.</title>
        <authorList>
            <person name="Engel S.R."/>
            <person name="Dietrich F.S."/>
            <person name="Fisk D.G."/>
            <person name="Binkley G."/>
            <person name="Balakrishnan R."/>
            <person name="Costanzo M.C."/>
            <person name="Dwight S.S."/>
            <person name="Hitz B.C."/>
            <person name="Karra K."/>
            <person name="Nash R.S."/>
            <person name="Weng S."/>
            <person name="Wong E.D."/>
            <person name="Lloyd P."/>
            <person name="Skrzypek M.S."/>
            <person name="Miyasato S.R."/>
            <person name="Simison M."/>
            <person name="Cherry J.M."/>
        </authorList>
    </citation>
    <scope>GENOME REANNOTATION</scope>
    <source>
        <strain>ATCC 204508 / S288c</strain>
    </source>
</reference>
<reference key="4">
    <citation type="submission" date="1995-12" db="EMBL/GenBank/DDBJ databases">
        <authorList>
            <person name="Boles E."/>
            <person name="Hettmann C."/>
            <person name="Zimmermann F.K."/>
        </authorList>
    </citation>
    <scope>NUCLEOTIDE SEQUENCE [GENOMIC DNA]</scope>
    <source>
        <strain>ENY.WA-1A</strain>
    </source>
</reference>
<reference key="5">
    <citation type="journal article" date="2008" name="Mol. Cell. Proteomics">
        <title>A multidimensional chromatography technology for in-depth phosphoproteome analysis.</title>
        <authorList>
            <person name="Albuquerque C.P."/>
            <person name="Smolka M.B."/>
            <person name="Payne S.H."/>
            <person name="Bafna V."/>
            <person name="Eng J."/>
            <person name="Zhou H."/>
        </authorList>
    </citation>
    <scope>IDENTIFICATION BY MASS SPECTROMETRY [LARGE SCALE ANALYSIS]</scope>
</reference>
<reference key="6">
    <citation type="journal article" date="2009" name="Science">
        <title>Global analysis of Cdk1 substrate phosphorylation sites provides insights into evolution.</title>
        <authorList>
            <person name="Holt L.J."/>
            <person name="Tuch B.B."/>
            <person name="Villen J."/>
            <person name="Johnson A.D."/>
            <person name="Gygi S.P."/>
            <person name="Morgan D.O."/>
        </authorList>
    </citation>
    <scope>IDENTIFICATION BY MASS SPECTROMETRY [LARGE SCALE ANALYSIS]</scope>
</reference>
<comment type="function">
    <text>Activator of the gluconeogenic enzymes FBP1 and PCK1 genes.</text>
</comment>
<comment type="subcellular location">
    <subcellularLocation>
        <location>Nucleus</location>
    </subcellularLocation>
</comment>
<comment type="PTM">
    <text>Could be the target of the SNF1/CAT1 - SNF4/CAT3 kinase complex.</text>
</comment>
<accession>P39113</accession>
<accession>D6W0A7</accession>
<name>CAT8_YEAST</name>
<evidence type="ECO:0000255" key="1">
    <source>
        <dbReference type="PROSITE-ProRule" id="PRU00227"/>
    </source>
</evidence>
<evidence type="ECO:0000256" key="2">
    <source>
        <dbReference type="SAM" id="MobiDB-lite"/>
    </source>
</evidence>
<evidence type="ECO:0000305" key="3"/>
<sequence>MANNNSDRQGLEPRVIRTLGSQALSGPSISNRTSSSEANPHFSKNVKEAMIKTASPTPLSTPIYRIAQACDRCRSKKTRCDGKRPQCSQCAAVGFECRISDKLLRKAYPKGYTESLEERVRELEAENKRLLALCDIKEQQISLVSQSRPQTSTDNTINGNFKHDLKDAPLNLSSTNIYLLNQTVNKQLQNGKMDGDNSGSAMSPLGAPPPPPHKDHLCDGVSCTNHLHVKPTSTSLNDPTAISFEQDEAPGLPAVKALKSMTTHQRSTQLATLVSLSIPRSTEEILFIPQLLTRIRQIFGFNSKQCLYTVSLLSSLKNRLPAPRLLAPSTSTKLKEKDEDKKLDDDSAFVKRFQSTNLSEFVDLKKFLISLKFNINSFSKQSEKPANDQDDELLSLTEIKELLHLFFKFWSNQVPILNNDHFLIYFNNFVEVVKHLSTENLETNNTTKSTVTTNHEIFALKLLMMLQMGLLVKIKMEKIKYTVPKNPKAKYARLMAYYHQLSLIIPKNPYFLNMSTTSLPSLQLLSLASFYYLNVGDISAIYGVRGRIVSMAQQLRLHRCPSAVLSVHSNPVLQKFEQSERRLLFWAIYYVDVFASLQLGVPRLLKDFDIECALPISDVEYKDQLSMENEKADKKAKKIQLQGQVSSFSLQIIRFAKILGNILDSIFKRGMMDERITSEVALVHENALDNWRNQLPEMYYFQITVNGTVNLDEIRATNQRNTETKFDKKDIILFEKKILLLFYFLAKSMIHLPVIATKPLPKNVDNATKKKQSMFNNDSKGATNQDHMILDVDMTSPAIRTSSSYIILQQATNATLTIFQAINSMYLPLPLNVSRTLIRFSLLCARGSLEYTKGGALFLDNKNLLLDTIKDIENDRLLDLPGIASWHTLKLFDMSINLLLKAPNVKVERLDKFLEKKLNYYNRLMGLPPATTTSLKPLFGSQSKNSLENRQRTPNVKRENPEHEYLYGNDSNNNNNSEAGHSPMTNTTNGNKRLKYEKDAKRNAKDGGISKGENAHNFQNDTKKNMSTSNLFPFSFSNTDLTALFTHPEGPNCTNTNNGNVDVCNRASTDATDANIENLSFLNMAPFLQTGNSNIGQNTIENKPMHMDAIFSLPSNLDLMKDNMDSKPEQLEPVIKQNPENSKNNQFHQKGKSTNMEKNNLSFNNKSNYSLTKLMRLLNNDNSFSNISINNFLYQNDQNSASADPGTNKKAVTNAGANFKPPSTGSNTSQGSILGSTKHGMDNCDFNDLGNFNNFMTNVNYSGVDYDYIVDASLGLAPLLVDTPDISNTNTTSTTSNRSKNSIILDTTFNDDLDRSRMNAREVLNPTDSILSQGMVSSVSTRNTSNQRSLSSGNDSKGDSSSQENSKSATGNQLDTPSTLFQMRRTSSGPSASHRGPRRPQKNRYNTDRSKSSGGGSSNTDNVSDLFQWQNAK</sequence>
<protein>
    <recommendedName>
        <fullName>Regulatory protein CAT8</fullName>
    </recommendedName>
</protein>
<organism>
    <name type="scientific">Saccharomyces cerevisiae (strain ATCC 204508 / S288c)</name>
    <name type="common">Baker's yeast</name>
    <dbReference type="NCBI Taxonomy" id="559292"/>
    <lineage>
        <taxon>Eukaryota</taxon>
        <taxon>Fungi</taxon>
        <taxon>Dikarya</taxon>
        <taxon>Ascomycota</taxon>
        <taxon>Saccharomycotina</taxon>
        <taxon>Saccharomycetes</taxon>
        <taxon>Saccharomycetales</taxon>
        <taxon>Saccharomycetaceae</taxon>
        <taxon>Saccharomyces</taxon>
    </lineage>
</organism>
<gene>
    <name type="primary">CAT8</name>
    <name type="synonym">MSP8</name>
    <name type="ordered locus">YMR280C</name>
    <name type="ORF">YM8021.06C</name>
</gene>
<keyword id="KW-0010">Activator</keyword>
<keyword id="KW-0119">Carbohydrate metabolism</keyword>
<keyword id="KW-0238">DNA-binding</keyword>
<keyword id="KW-0479">Metal-binding</keyword>
<keyword id="KW-0539">Nucleus</keyword>
<keyword id="KW-1185">Reference proteome</keyword>
<keyword id="KW-0804">Transcription</keyword>
<keyword id="KW-0805">Transcription regulation</keyword>
<keyword id="KW-0862">Zinc</keyword>